<dbReference type="EC" id="1.1.-.-" evidence="1"/>
<dbReference type="EMBL" id="CU928158">
    <property type="protein sequence ID" value="CAQ91071.1"/>
    <property type="molecule type" value="Genomic_DNA"/>
</dbReference>
<dbReference type="RefSeq" id="WP_000586937.1">
    <property type="nucleotide sequence ID" value="NC_011740.1"/>
</dbReference>
<dbReference type="SMR" id="B7LTL2"/>
<dbReference type="GeneID" id="75059796"/>
<dbReference type="KEGG" id="efe:EFER_3599"/>
<dbReference type="HOGENOM" id="CLU_020639_0_0_6"/>
<dbReference type="OrthoDB" id="9770452at2"/>
<dbReference type="Proteomes" id="UP000000745">
    <property type="component" value="Chromosome"/>
</dbReference>
<dbReference type="GO" id="GO:0005886">
    <property type="term" value="C:plasma membrane"/>
    <property type="evidence" value="ECO:0007669"/>
    <property type="project" value="UniProtKB-SubCell"/>
</dbReference>
<dbReference type="GO" id="GO:0010181">
    <property type="term" value="F:FMN binding"/>
    <property type="evidence" value="ECO:0007669"/>
    <property type="project" value="InterPro"/>
</dbReference>
<dbReference type="GO" id="GO:0004459">
    <property type="term" value="F:L-lactate dehydrogenase activity"/>
    <property type="evidence" value="ECO:0007669"/>
    <property type="project" value="UniProtKB-UniRule"/>
</dbReference>
<dbReference type="GO" id="GO:0009060">
    <property type="term" value="P:aerobic respiration"/>
    <property type="evidence" value="ECO:0007669"/>
    <property type="project" value="TreeGrafter"/>
</dbReference>
<dbReference type="GO" id="GO:0006089">
    <property type="term" value="P:lactate metabolic process"/>
    <property type="evidence" value="ECO:0007669"/>
    <property type="project" value="UniProtKB-UniRule"/>
</dbReference>
<dbReference type="CDD" id="cd02809">
    <property type="entry name" value="alpha_hydroxyacid_oxid_FMN"/>
    <property type="match status" value="1"/>
</dbReference>
<dbReference type="FunFam" id="3.20.20.70:FF:000029">
    <property type="entry name" value="L-lactate dehydrogenase"/>
    <property type="match status" value="1"/>
</dbReference>
<dbReference type="Gene3D" id="3.20.20.70">
    <property type="entry name" value="Aldolase class I"/>
    <property type="match status" value="1"/>
</dbReference>
<dbReference type="HAMAP" id="MF_01559">
    <property type="entry name" value="L_lact_dehydr"/>
    <property type="match status" value="1"/>
</dbReference>
<dbReference type="InterPro" id="IPR013785">
    <property type="entry name" value="Aldolase_TIM"/>
</dbReference>
<dbReference type="InterPro" id="IPR012133">
    <property type="entry name" value="Alpha-hydoxy_acid_DH_FMN"/>
</dbReference>
<dbReference type="InterPro" id="IPR000262">
    <property type="entry name" value="FMN-dep_DH"/>
</dbReference>
<dbReference type="InterPro" id="IPR037396">
    <property type="entry name" value="FMN_HAD"/>
</dbReference>
<dbReference type="InterPro" id="IPR008259">
    <property type="entry name" value="FMN_hydac_DH_AS"/>
</dbReference>
<dbReference type="InterPro" id="IPR020920">
    <property type="entry name" value="LldD"/>
</dbReference>
<dbReference type="NCBIfam" id="NF033901">
    <property type="entry name" value="L_lactate_LldD"/>
    <property type="match status" value="1"/>
</dbReference>
<dbReference type="NCBIfam" id="NF008398">
    <property type="entry name" value="PRK11197.1"/>
    <property type="match status" value="1"/>
</dbReference>
<dbReference type="PANTHER" id="PTHR10578:SF85">
    <property type="entry name" value="L-LACTATE DEHYDROGENASE"/>
    <property type="match status" value="1"/>
</dbReference>
<dbReference type="PANTHER" id="PTHR10578">
    <property type="entry name" value="S -2-HYDROXY-ACID OXIDASE-RELATED"/>
    <property type="match status" value="1"/>
</dbReference>
<dbReference type="Pfam" id="PF01070">
    <property type="entry name" value="FMN_dh"/>
    <property type="match status" value="1"/>
</dbReference>
<dbReference type="PIRSF" id="PIRSF000138">
    <property type="entry name" value="Al-hdrx_acd_dh"/>
    <property type="match status" value="1"/>
</dbReference>
<dbReference type="SUPFAM" id="SSF51395">
    <property type="entry name" value="FMN-linked oxidoreductases"/>
    <property type="match status" value="1"/>
</dbReference>
<dbReference type="PROSITE" id="PS00557">
    <property type="entry name" value="FMN_HYDROXY_ACID_DH_1"/>
    <property type="match status" value="1"/>
</dbReference>
<dbReference type="PROSITE" id="PS51349">
    <property type="entry name" value="FMN_HYDROXY_ACID_DH_2"/>
    <property type="match status" value="1"/>
</dbReference>
<gene>
    <name evidence="1" type="primary">lldD</name>
    <name type="ordered locus">EFER_3599</name>
</gene>
<name>LLDD_ESCF3</name>
<comment type="function">
    <text evidence="1">Catalyzes the conversion of L-lactate to pyruvate. Is coupled to the respiratory chain.</text>
</comment>
<comment type="catalytic activity">
    <reaction evidence="1">
        <text>(S)-lactate + A = pyruvate + AH2</text>
        <dbReference type="Rhea" id="RHEA:45816"/>
        <dbReference type="ChEBI" id="CHEBI:13193"/>
        <dbReference type="ChEBI" id="CHEBI:15361"/>
        <dbReference type="ChEBI" id="CHEBI:16651"/>
        <dbReference type="ChEBI" id="CHEBI:17499"/>
    </reaction>
</comment>
<comment type="cofactor">
    <cofactor evidence="1">
        <name>FMN</name>
        <dbReference type="ChEBI" id="CHEBI:58210"/>
    </cofactor>
</comment>
<comment type="subcellular location">
    <subcellularLocation>
        <location evidence="1">Cell inner membrane</location>
        <topology evidence="1">Peripheral membrane protein</topology>
    </subcellularLocation>
</comment>
<comment type="similarity">
    <text evidence="1">Belongs to the FMN-dependent alpha-hydroxy acid dehydrogenase family.</text>
</comment>
<feature type="chain" id="PRO_0000383431" description="L-lactate dehydrogenase">
    <location>
        <begin position="1"/>
        <end position="396"/>
    </location>
</feature>
<feature type="domain" description="FMN hydroxy acid dehydrogenase" evidence="1">
    <location>
        <begin position="1"/>
        <end position="380"/>
    </location>
</feature>
<feature type="active site" description="Proton acceptor" evidence="1">
    <location>
        <position position="275"/>
    </location>
</feature>
<feature type="binding site" evidence="1">
    <location>
        <position position="24"/>
    </location>
    <ligand>
        <name>substrate</name>
    </ligand>
</feature>
<feature type="binding site" evidence="1">
    <location>
        <position position="106"/>
    </location>
    <ligand>
        <name>FMN</name>
        <dbReference type="ChEBI" id="CHEBI:58210"/>
    </ligand>
</feature>
<feature type="binding site" evidence="1">
    <location>
        <position position="127"/>
    </location>
    <ligand>
        <name>FMN</name>
        <dbReference type="ChEBI" id="CHEBI:58210"/>
    </ligand>
</feature>
<feature type="binding site" evidence="1">
    <location>
        <position position="129"/>
    </location>
    <ligand>
        <name>substrate</name>
    </ligand>
</feature>
<feature type="binding site" evidence="1">
    <location>
        <position position="155"/>
    </location>
    <ligand>
        <name>FMN</name>
        <dbReference type="ChEBI" id="CHEBI:58210"/>
    </ligand>
</feature>
<feature type="binding site" evidence="1">
    <location>
        <position position="164"/>
    </location>
    <ligand>
        <name>substrate</name>
    </ligand>
</feature>
<feature type="binding site" evidence="1">
    <location>
        <position position="251"/>
    </location>
    <ligand>
        <name>FMN</name>
        <dbReference type="ChEBI" id="CHEBI:58210"/>
    </ligand>
</feature>
<feature type="binding site" evidence="1">
    <location>
        <position position="278"/>
    </location>
    <ligand>
        <name>substrate</name>
    </ligand>
</feature>
<feature type="binding site" evidence="1">
    <location>
        <begin position="306"/>
        <end position="330"/>
    </location>
    <ligand>
        <name>FMN</name>
        <dbReference type="ChEBI" id="CHEBI:58210"/>
    </ligand>
</feature>
<keyword id="KW-0997">Cell inner membrane</keyword>
<keyword id="KW-1003">Cell membrane</keyword>
<keyword id="KW-0285">Flavoprotein</keyword>
<keyword id="KW-0288">FMN</keyword>
<keyword id="KW-0472">Membrane</keyword>
<keyword id="KW-0560">Oxidoreductase</keyword>
<sequence length="396" mass="42781">MIISAASDYRAAAQRILPPFLFHYIDGGAYAEYTLRRNVEDLSQVALRQRVLKNMSDLSLETTLFNEKLSMPVALAPVGLCGMYARRGEVQAAGAADAHGIPFTLSTVSVCPIEEVAPTIKRPMWFQLYVLRDRGFMRNALERAKAAGCSTLVFTVDMPTPGARYRDAHSGMSGPNAAMRRYWQAVTHPQWAWDVGLNGRPHDLGNISAYLGKPTGLEDYIGWLANNFDPSISWKDLEWIRDFWDGPMVIKGILDPEDARDAVRFGADGIVVSNHGGRQLDGVLSSARALPAIADAVKGDIAILADSGIRNGLDVVRMIALGADTVLLGRAYLYALATAGKAGVANLLNLIEKEMKVAMTLTGAKSISEISQDSLVQELDKALPAALAPLAKGNAA</sequence>
<accession>B7LTL2</accession>
<evidence type="ECO:0000255" key="1">
    <source>
        <dbReference type="HAMAP-Rule" id="MF_01559"/>
    </source>
</evidence>
<protein>
    <recommendedName>
        <fullName evidence="1">L-lactate dehydrogenase</fullName>
        <ecNumber evidence="1">1.1.-.-</ecNumber>
    </recommendedName>
</protein>
<proteinExistence type="inferred from homology"/>
<organism>
    <name type="scientific">Escherichia fergusonii (strain ATCC 35469 / DSM 13698 / CCUG 18766 / IAM 14443 / JCM 21226 / LMG 7866 / NBRC 102419 / NCTC 12128 / CDC 0568-73)</name>
    <dbReference type="NCBI Taxonomy" id="585054"/>
    <lineage>
        <taxon>Bacteria</taxon>
        <taxon>Pseudomonadati</taxon>
        <taxon>Pseudomonadota</taxon>
        <taxon>Gammaproteobacteria</taxon>
        <taxon>Enterobacterales</taxon>
        <taxon>Enterobacteriaceae</taxon>
        <taxon>Escherichia</taxon>
    </lineage>
</organism>
<reference key="1">
    <citation type="journal article" date="2009" name="PLoS Genet.">
        <title>Organised genome dynamics in the Escherichia coli species results in highly diverse adaptive paths.</title>
        <authorList>
            <person name="Touchon M."/>
            <person name="Hoede C."/>
            <person name="Tenaillon O."/>
            <person name="Barbe V."/>
            <person name="Baeriswyl S."/>
            <person name="Bidet P."/>
            <person name="Bingen E."/>
            <person name="Bonacorsi S."/>
            <person name="Bouchier C."/>
            <person name="Bouvet O."/>
            <person name="Calteau A."/>
            <person name="Chiapello H."/>
            <person name="Clermont O."/>
            <person name="Cruveiller S."/>
            <person name="Danchin A."/>
            <person name="Diard M."/>
            <person name="Dossat C."/>
            <person name="Karoui M.E."/>
            <person name="Frapy E."/>
            <person name="Garry L."/>
            <person name="Ghigo J.M."/>
            <person name="Gilles A.M."/>
            <person name="Johnson J."/>
            <person name="Le Bouguenec C."/>
            <person name="Lescat M."/>
            <person name="Mangenot S."/>
            <person name="Martinez-Jehanne V."/>
            <person name="Matic I."/>
            <person name="Nassif X."/>
            <person name="Oztas S."/>
            <person name="Petit M.A."/>
            <person name="Pichon C."/>
            <person name="Rouy Z."/>
            <person name="Ruf C.S."/>
            <person name="Schneider D."/>
            <person name="Tourret J."/>
            <person name="Vacherie B."/>
            <person name="Vallenet D."/>
            <person name="Medigue C."/>
            <person name="Rocha E.P.C."/>
            <person name="Denamur E."/>
        </authorList>
    </citation>
    <scope>NUCLEOTIDE SEQUENCE [LARGE SCALE GENOMIC DNA]</scope>
    <source>
        <strain>ATCC 35469 / DSM 13698 / BCRC 15582 / CCUG 18766 / IAM 14443 / JCM 21226 / LMG 7866 / NBRC 102419 / NCTC 12128 / CDC 0568-73</strain>
    </source>
</reference>